<gene>
    <name type="primary">cca</name>
</gene>
<name>CCA_AERHY</name>
<dbReference type="EC" id="2.7.7.72" evidence="1"/>
<dbReference type="EMBL" id="X81473">
    <property type="status" value="NOT_ANNOTATED_CDS"/>
    <property type="molecule type" value="Genomic_DNA"/>
</dbReference>
<dbReference type="SMR" id="P45749"/>
<dbReference type="eggNOG" id="COG0617">
    <property type="taxonomic scope" value="Bacteria"/>
</dbReference>
<dbReference type="GO" id="GO:0005524">
    <property type="term" value="F:ATP binding"/>
    <property type="evidence" value="ECO:0007669"/>
    <property type="project" value="UniProtKB-KW"/>
</dbReference>
<dbReference type="GO" id="GO:0004810">
    <property type="term" value="F:CCA tRNA nucleotidyltransferase activity"/>
    <property type="evidence" value="ECO:0007669"/>
    <property type="project" value="UniProtKB-EC"/>
</dbReference>
<dbReference type="GO" id="GO:0046872">
    <property type="term" value="F:metal ion binding"/>
    <property type="evidence" value="ECO:0007669"/>
    <property type="project" value="UniProtKB-KW"/>
</dbReference>
<dbReference type="GO" id="GO:0003723">
    <property type="term" value="F:RNA binding"/>
    <property type="evidence" value="ECO:0007669"/>
    <property type="project" value="UniProtKB-KW"/>
</dbReference>
<dbReference type="GO" id="GO:0042245">
    <property type="term" value="P:RNA repair"/>
    <property type="evidence" value="ECO:0007669"/>
    <property type="project" value="UniProtKB-KW"/>
</dbReference>
<dbReference type="GO" id="GO:0008033">
    <property type="term" value="P:tRNA processing"/>
    <property type="evidence" value="ECO:0007669"/>
    <property type="project" value="UniProtKB-KW"/>
</dbReference>
<dbReference type="Gene3D" id="3.30.460.10">
    <property type="entry name" value="Beta Polymerase, domain 2"/>
    <property type="match status" value="1"/>
</dbReference>
<dbReference type="Gene3D" id="1.10.3090.10">
    <property type="entry name" value="cca-adding enzyme, domain 2"/>
    <property type="match status" value="1"/>
</dbReference>
<dbReference type="InterPro" id="IPR043519">
    <property type="entry name" value="NT_sf"/>
</dbReference>
<dbReference type="InterPro" id="IPR002646">
    <property type="entry name" value="PolA_pol_head_dom"/>
</dbReference>
<dbReference type="InterPro" id="IPR032828">
    <property type="entry name" value="PolyA_RNA-bd"/>
</dbReference>
<dbReference type="InterPro" id="IPR050124">
    <property type="entry name" value="tRNA_CCA-adding_enzyme"/>
</dbReference>
<dbReference type="PANTHER" id="PTHR47545">
    <property type="entry name" value="MULTIFUNCTIONAL CCA PROTEIN"/>
    <property type="match status" value="1"/>
</dbReference>
<dbReference type="PANTHER" id="PTHR47545:SF1">
    <property type="entry name" value="MULTIFUNCTIONAL CCA PROTEIN"/>
    <property type="match status" value="1"/>
</dbReference>
<dbReference type="Pfam" id="PF01743">
    <property type="entry name" value="PolyA_pol"/>
    <property type="match status" value="1"/>
</dbReference>
<dbReference type="Pfam" id="PF12627">
    <property type="entry name" value="PolyA_pol_RNAbd"/>
    <property type="match status" value="1"/>
</dbReference>
<dbReference type="SUPFAM" id="SSF81301">
    <property type="entry name" value="Nucleotidyltransferase"/>
    <property type="match status" value="1"/>
</dbReference>
<dbReference type="SUPFAM" id="SSF81891">
    <property type="entry name" value="Poly A polymerase C-terminal region-like"/>
    <property type="match status" value="1"/>
</dbReference>
<evidence type="ECO:0000250" key="1">
    <source>
        <dbReference type="UniProtKB" id="O28126"/>
    </source>
</evidence>
<evidence type="ECO:0000250" key="2">
    <source>
        <dbReference type="UniProtKB" id="Q7SIB1"/>
    </source>
</evidence>
<evidence type="ECO:0000305" key="3"/>
<protein>
    <recommendedName>
        <fullName>CCA-adding enzyme</fullName>
        <ecNumber evidence="1">2.7.7.72</ecNumber>
    </recommendedName>
    <alternativeName>
        <fullName>CCA tRNA nucleotidyltransferase</fullName>
    </alternativeName>
    <alternativeName>
        <fullName>tRNA CCA-pyrophosphorylase</fullName>
    </alternativeName>
    <alternativeName>
        <fullName>tRNA adenylyl-/cytidylyl- transferase</fullName>
    </alternativeName>
    <alternativeName>
        <fullName>tRNA nucleotidyltransferase</fullName>
    </alternativeName>
    <alternativeName>
        <fullName>tRNA-NT</fullName>
    </alternativeName>
</protein>
<sequence>MQTYLVGGAVRDRLLGLPQGDRDHLVVGATVEQMLALGFTQVGRDFPVFLHPKTQQEYALARTERKQGRGYTGFVCHASPEVTLEQDLLRRDLTVNAIAEDEEGRLHDPYGGIQDLERRVLRHVSPAFAEDPLRILRVARFAARFHAQGFVVAPETLALMREMTDAGELAHLTPERVWKELERVLLGETPQI</sequence>
<keyword id="KW-0067">ATP-binding</keyword>
<keyword id="KW-0460">Magnesium</keyword>
<keyword id="KW-0479">Metal-binding</keyword>
<keyword id="KW-0547">Nucleotide-binding</keyword>
<keyword id="KW-0548">Nucleotidyltransferase</keyword>
<keyword id="KW-0692">RNA repair</keyword>
<keyword id="KW-0694">RNA-binding</keyword>
<keyword id="KW-0808">Transferase</keyword>
<keyword id="KW-0819">tRNA processing</keyword>
<proteinExistence type="inferred from homology"/>
<comment type="function">
    <text evidence="1">Catalyzes the addition and repair of the essential 3'-terminal CCA sequence in tRNAs without using a nucleic acid template. Adds these three nucleotides in the order of C, C, and A to the tRNA nucleotide-73, using CTP and ATP as substrates and producing inorganic pyrophosphate. tRNA 3'-terminal CCA addition is required both for tRNA processing and repair. Also involved in tRNA surveillance by mediating tandem CCA addition to generate a CCACCA at the 3' terminus of unstable tRNAs. While stable tRNAs receive only 3'-terminal CCA, unstable tRNAs are marked with CCACCA and rapidly degraded. The structural flexibility of RNA controls the choice between CCA versus CCACCA addition: following the first CCA addition cycle, nucleotide-binding to the active site triggers a clockwise screw motion, producing torque on the RNA. This ejects stable RNAs, whereas unstable RNAs are refolded while bound to the enzyme and subjected to a second CCA catalytic cycle.</text>
</comment>
<comment type="catalytic activity">
    <reaction evidence="1">
        <text>a tRNA precursor + 2 CTP + ATP = a tRNA with a 3' CCA end + 3 diphosphate</text>
        <dbReference type="Rhea" id="RHEA:14433"/>
        <dbReference type="Rhea" id="RHEA-COMP:10465"/>
        <dbReference type="Rhea" id="RHEA-COMP:10468"/>
        <dbReference type="ChEBI" id="CHEBI:30616"/>
        <dbReference type="ChEBI" id="CHEBI:33019"/>
        <dbReference type="ChEBI" id="CHEBI:37563"/>
        <dbReference type="ChEBI" id="CHEBI:74896"/>
        <dbReference type="ChEBI" id="CHEBI:83071"/>
        <dbReference type="EC" id="2.7.7.72"/>
    </reaction>
</comment>
<comment type="catalytic activity">
    <reaction evidence="1">
        <text>a tRNA with a 3' CCA end + 2 CTP + ATP = a tRNA with a 3' CCACCA end + 3 diphosphate</text>
        <dbReference type="Rhea" id="RHEA:76235"/>
        <dbReference type="Rhea" id="RHEA-COMP:10468"/>
        <dbReference type="Rhea" id="RHEA-COMP:18655"/>
        <dbReference type="ChEBI" id="CHEBI:30616"/>
        <dbReference type="ChEBI" id="CHEBI:33019"/>
        <dbReference type="ChEBI" id="CHEBI:37563"/>
        <dbReference type="ChEBI" id="CHEBI:83071"/>
        <dbReference type="ChEBI" id="CHEBI:195187"/>
    </reaction>
    <physiologicalReaction direction="left-to-right" evidence="1">
        <dbReference type="Rhea" id="RHEA:76236"/>
    </physiologicalReaction>
</comment>
<comment type="cofactor">
    <cofactor evidence="1">
        <name>Mg(2+)</name>
        <dbReference type="ChEBI" id="CHEBI:18420"/>
    </cofactor>
</comment>
<comment type="subunit">
    <text evidence="1">Homodimer.</text>
</comment>
<comment type="similarity">
    <text evidence="3">Belongs to the tRNA nucleotidyltransferase/poly(A) polymerase family. Bacterial CCA-adding enzyme type 2 subfamily.</text>
</comment>
<feature type="chain" id="PRO_0000139013" description="CCA-adding enzyme">
    <location>
        <begin position="1"/>
        <end position="192" status="greater than"/>
    </location>
</feature>
<feature type="binding site" evidence="2">
    <location>
        <position position="8"/>
    </location>
    <ligand>
        <name>ATP</name>
        <dbReference type="ChEBI" id="CHEBI:30616"/>
    </ligand>
</feature>
<feature type="binding site" evidence="2">
    <location>
        <position position="8"/>
    </location>
    <ligand>
        <name>CTP</name>
        <dbReference type="ChEBI" id="CHEBI:37563"/>
    </ligand>
</feature>
<feature type="binding site" evidence="2">
    <location>
        <position position="11"/>
    </location>
    <ligand>
        <name>ATP</name>
        <dbReference type="ChEBI" id="CHEBI:30616"/>
    </ligand>
</feature>
<feature type="binding site" evidence="2">
    <location>
        <position position="11"/>
    </location>
    <ligand>
        <name>CTP</name>
        <dbReference type="ChEBI" id="CHEBI:37563"/>
    </ligand>
</feature>
<feature type="binding site" evidence="2">
    <location>
        <position position="21"/>
    </location>
    <ligand>
        <name>Mg(2+)</name>
        <dbReference type="ChEBI" id="CHEBI:18420"/>
    </ligand>
</feature>
<feature type="binding site" evidence="2">
    <location>
        <position position="23"/>
    </location>
    <ligand>
        <name>Mg(2+)</name>
        <dbReference type="ChEBI" id="CHEBI:18420"/>
    </ligand>
</feature>
<feature type="binding site" evidence="2">
    <location>
        <position position="91"/>
    </location>
    <ligand>
        <name>ATP</name>
        <dbReference type="ChEBI" id="CHEBI:30616"/>
    </ligand>
</feature>
<feature type="binding site" evidence="2">
    <location>
        <position position="91"/>
    </location>
    <ligand>
        <name>CTP</name>
        <dbReference type="ChEBI" id="CHEBI:37563"/>
    </ligand>
</feature>
<feature type="binding site" evidence="2">
    <location>
        <position position="137"/>
    </location>
    <ligand>
        <name>ATP</name>
        <dbReference type="ChEBI" id="CHEBI:30616"/>
    </ligand>
</feature>
<feature type="binding site" evidence="2">
    <location>
        <position position="137"/>
    </location>
    <ligand>
        <name>CTP</name>
        <dbReference type="ChEBI" id="CHEBI:37563"/>
    </ligand>
</feature>
<feature type="binding site" evidence="2">
    <location>
        <position position="140"/>
    </location>
    <ligand>
        <name>ATP</name>
        <dbReference type="ChEBI" id="CHEBI:30616"/>
    </ligand>
</feature>
<feature type="binding site" evidence="2">
    <location>
        <position position="140"/>
    </location>
    <ligand>
        <name>CTP</name>
        <dbReference type="ChEBI" id="CHEBI:37563"/>
    </ligand>
</feature>
<feature type="non-terminal residue">
    <location>
        <position position="192"/>
    </location>
</feature>
<reference key="1">
    <citation type="journal article" date="1994" name="J. Bacteriol.">
        <title>Isolation and characterization of a second exe operon required for extracellular protein secretion in Aeromonas hydrophila.</title>
        <authorList>
            <person name="Jahagirdar R."/>
            <person name="Howard S.P."/>
        </authorList>
    </citation>
    <scope>NUCLEOTIDE SEQUENCE [GENOMIC DNA]</scope>
    <source>
        <strain>Ah65</strain>
    </source>
</reference>
<accession>P45749</accession>
<organism>
    <name type="scientific">Aeromonas hydrophila</name>
    <dbReference type="NCBI Taxonomy" id="644"/>
    <lineage>
        <taxon>Bacteria</taxon>
        <taxon>Pseudomonadati</taxon>
        <taxon>Pseudomonadota</taxon>
        <taxon>Gammaproteobacteria</taxon>
        <taxon>Aeromonadales</taxon>
        <taxon>Aeromonadaceae</taxon>
        <taxon>Aeromonas</taxon>
    </lineage>
</organism>